<sequence length="223" mass="25955">MKKRLHLIIADSELELVPESIIDHPAIVNYAKRRKKKPEKIILDSTYHHAALRQLEDGERRGRPDIVHICLLNALDSILNKEDRLRVYVHTRNDEVIYVDPSTRLPRNYNRFIGLMESLFEKKVVPEDLQLLRLEKKTLAELINEISPDAVFIMHENGEFMIPKHFGKLLASFKKPVVIVGGFPHGDFRSKVEGVKISLYREPLMAWTIVNEVIVSYEWEVIK</sequence>
<reference key="1">
    <citation type="journal article" date="1999" name="Genetics">
        <title>Divergence of the hyperthermophilic archaea Pyrococcus furiosus and P. horikoshii inferred from complete genomic sequences.</title>
        <authorList>
            <person name="Maeder D.L."/>
            <person name="Weiss R.B."/>
            <person name="Dunn D.M."/>
            <person name="Cherry J.L."/>
            <person name="Gonzalez J.M."/>
            <person name="DiRuggiero J."/>
            <person name="Robb F.T."/>
        </authorList>
    </citation>
    <scope>NUCLEOTIDE SEQUENCE [LARGE SCALE GENOMIC DNA]</scope>
    <source>
        <strain>ATCC 43587 / DSM 3638 / JCM 8422 / Vc1</strain>
    </source>
</reference>
<keyword id="KW-0489">Methyltransferase</keyword>
<keyword id="KW-1185">Reference proteome</keyword>
<keyword id="KW-0690">Ribosome biogenesis</keyword>
<keyword id="KW-0694">RNA-binding</keyword>
<keyword id="KW-0698">rRNA processing</keyword>
<keyword id="KW-0699">rRNA-binding</keyword>
<keyword id="KW-0949">S-adenosyl-L-methionine</keyword>
<keyword id="KW-0808">Transferase</keyword>
<gene>
    <name evidence="2" type="primary">nep1</name>
    <name type="ordered locus">PF1262</name>
</gene>
<organism>
    <name type="scientific">Pyrococcus furiosus (strain ATCC 43587 / DSM 3638 / JCM 8422 / Vc1)</name>
    <dbReference type="NCBI Taxonomy" id="186497"/>
    <lineage>
        <taxon>Archaea</taxon>
        <taxon>Methanobacteriati</taxon>
        <taxon>Methanobacteriota</taxon>
        <taxon>Thermococci</taxon>
        <taxon>Thermococcales</taxon>
        <taxon>Thermococcaceae</taxon>
        <taxon>Pyrococcus</taxon>
    </lineage>
</organism>
<protein>
    <recommendedName>
        <fullName evidence="2">Ribosomal RNA small subunit methyltransferase Nep1</fullName>
        <ecNumber evidence="2">2.1.1.-</ecNumber>
    </recommendedName>
    <alternativeName>
        <fullName evidence="2">16S rRNA (pseudouridine-N1-)-methyltransferase Nep1</fullName>
    </alternativeName>
</protein>
<comment type="function">
    <text evidence="2">Methyltransferase involved in ribosomal biogenesis. Specifically catalyzes the N1-methylation of the pseudouridine corresponding to position 914 in M.jannaschii 16S rRNA.</text>
</comment>
<comment type="catalytic activity">
    <reaction evidence="2">
        <text>a pseudouridine in rRNA + S-adenosyl-L-methionine = an N(1)-methylpseudouridine in rRNA + S-adenosyl-L-homocysteine + H(+)</text>
        <dbReference type="Rhea" id="RHEA:46696"/>
        <dbReference type="Rhea" id="RHEA-COMP:11634"/>
        <dbReference type="Rhea" id="RHEA-COMP:13933"/>
        <dbReference type="ChEBI" id="CHEBI:15378"/>
        <dbReference type="ChEBI" id="CHEBI:57856"/>
        <dbReference type="ChEBI" id="CHEBI:59789"/>
        <dbReference type="ChEBI" id="CHEBI:65314"/>
        <dbReference type="ChEBI" id="CHEBI:74890"/>
    </reaction>
</comment>
<comment type="subunit">
    <text evidence="2">Homodimer.</text>
</comment>
<comment type="similarity">
    <text evidence="3">Belongs to the class IV-like SAM-binding methyltransferase superfamily. RNA methyltransferase NEP1 family.</text>
</comment>
<comment type="sequence caution" evidence="3">
    <conflict type="erroneous initiation">
        <sequence resource="EMBL-CDS" id="AAL81386"/>
    </conflict>
</comment>
<feature type="chain" id="PRO_0000158619" description="Ribosomal RNA small subunit methyltransferase Nep1">
    <location>
        <begin position="1"/>
        <end position="223"/>
    </location>
</feature>
<feature type="binding site" evidence="2">
    <location>
        <position position="181"/>
    </location>
    <ligand>
        <name>S-adenosyl-L-methionine</name>
        <dbReference type="ChEBI" id="CHEBI:59789"/>
    </ligand>
</feature>
<feature type="binding site" evidence="2">
    <location>
        <position position="186"/>
    </location>
    <ligand>
        <name>S-adenosyl-L-methionine</name>
        <dbReference type="ChEBI" id="CHEBI:59789"/>
    </ligand>
</feature>
<feature type="binding site" evidence="2">
    <location>
        <begin position="199"/>
        <end position="204"/>
    </location>
    <ligand>
        <name>S-adenosyl-L-methionine</name>
        <dbReference type="ChEBI" id="CHEBI:59789"/>
    </ligand>
</feature>
<feature type="site" description="Interaction with substrate rRNA" evidence="2">
    <location>
        <position position="63"/>
    </location>
</feature>
<feature type="site" description="Stabilizes Arg-63" evidence="1">
    <location>
        <position position="65"/>
    </location>
</feature>
<feature type="site" description="Interaction with substrate rRNA" evidence="2">
    <location>
        <position position="104"/>
    </location>
</feature>
<feature type="site" description="Interaction with substrate rRNA" evidence="2">
    <location>
        <position position="107"/>
    </location>
</feature>
<feature type="site" description="Interaction with substrate rRNA" evidence="2">
    <location>
        <position position="111"/>
    </location>
</feature>
<dbReference type="EC" id="2.1.1.-" evidence="2"/>
<dbReference type="EMBL" id="AE009950">
    <property type="protein sequence ID" value="AAL81386.1"/>
    <property type="status" value="ALT_INIT"/>
    <property type="molecule type" value="Genomic_DNA"/>
</dbReference>
<dbReference type="RefSeq" id="WP_014835371.1">
    <property type="nucleotide sequence ID" value="NZ_CP023154.1"/>
</dbReference>
<dbReference type="SMR" id="Q8U1E6"/>
<dbReference type="STRING" id="186497.PF1262"/>
<dbReference type="PaxDb" id="186497-PF1262"/>
<dbReference type="KEGG" id="pfu:PF1262"/>
<dbReference type="PATRIC" id="fig|186497.12.peg.1324"/>
<dbReference type="eggNOG" id="arCOG04122">
    <property type="taxonomic scope" value="Archaea"/>
</dbReference>
<dbReference type="HOGENOM" id="CLU_055846_1_3_2"/>
<dbReference type="OrthoDB" id="7612at2157"/>
<dbReference type="PhylomeDB" id="Q8U1E6"/>
<dbReference type="Proteomes" id="UP000001013">
    <property type="component" value="Chromosome"/>
</dbReference>
<dbReference type="GO" id="GO:0070037">
    <property type="term" value="F:rRNA (pseudouridine) methyltransferase activity"/>
    <property type="evidence" value="ECO:0007669"/>
    <property type="project" value="UniProtKB-UniRule"/>
</dbReference>
<dbReference type="GO" id="GO:0019843">
    <property type="term" value="F:rRNA binding"/>
    <property type="evidence" value="ECO:0007669"/>
    <property type="project" value="UniProtKB-UniRule"/>
</dbReference>
<dbReference type="GO" id="GO:0070475">
    <property type="term" value="P:rRNA base methylation"/>
    <property type="evidence" value="ECO:0007669"/>
    <property type="project" value="InterPro"/>
</dbReference>
<dbReference type="CDD" id="cd18088">
    <property type="entry name" value="Nep1-like"/>
    <property type="match status" value="1"/>
</dbReference>
<dbReference type="FunFam" id="3.40.1280.10:FF:000042">
    <property type="entry name" value="Ribosomal RNA small subunit methyltransferase Nep1"/>
    <property type="match status" value="1"/>
</dbReference>
<dbReference type="Gene3D" id="3.40.1280.10">
    <property type="match status" value="1"/>
</dbReference>
<dbReference type="HAMAP" id="MF_00554">
    <property type="entry name" value="NEP1"/>
    <property type="match status" value="1"/>
</dbReference>
<dbReference type="InterPro" id="IPR029028">
    <property type="entry name" value="Alpha/beta_knot_MTases"/>
</dbReference>
<dbReference type="InterPro" id="IPR005304">
    <property type="entry name" value="Rbsml_bgen_MeTrfase_EMG1/NEP1"/>
</dbReference>
<dbReference type="InterPro" id="IPR023503">
    <property type="entry name" value="Ribosome_NEP1_arc"/>
</dbReference>
<dbReference type="InterPro" id="IPR029026">
    <property type="entry name" value="tRNA_m1G_MTases_N"/>
</dbReference>
<dbReference type="NCBIfam" id="NF003205">
    <property type="entry name" value="PRK04171.1-5"/>
    <property type="match status" value="1"/>
</dbReference>
<dbReference type="NCBIfam" id="NF003207">
    <property type="entry name" value="PRK04171.2-2"/>
    <property type="match status" value="1"/>
</dbReference>
<dbReference type="PANTHER" id="PTHR12636">
    <property type="entry name" value="NEP1/MRA1"/>
    <property type="match status" value="1"/>
</dbReference>
<dbReference type="PANTHER" id="PTHR12636:SF5">
    <property type="entry name" value="RIBOSOMAL RNA SMALL SUBUNIT METHYLTRANSFERASE NEP1"/>
    <property type="match status" value="1"/>
</dbReference>
<dbReference type="Pfam" id="PF03587">
    <property type="entry name" value="EMG1"/>
    <property type="match status" value="1"/>
</dbReference>
<dbReference type="SUPFAM" id="SSF75217">
    <property type="entry name" value="alpha/beta knot"/>
    <property type="match status" value="1"/>
</dbReference>
<proteinExistence type="inferred from homology"/>
<name>NEP1_PYRFU</name>
<accession>Q8U1E6</accession>
<evidence type="ECO:0000250" key="1"/>
<evidence type="ECO:0000255" key="2">
    <source>
        <dbReference type="HAMAP-Rule" id="MF_00554"/>
    </source>
</evidence>
<evidence type="ECO:0000305" key="3"/>